<gene>
    <name type="primary">ecpR</name>
    <name type="synonym">matA</name>
    <name type="synonym">ykgK</name>
    <name type="ordered locus">b0294</name>
    <name type="ordered locus">JW5031</name>
</gene>
<protein>
    <recommendedName>
        <fullName>HTH-type transcriptional regulator EcpR</fullName>
    </recommendedName>
</protein>
<reference key="1">
    <citation type="submission" date="1997-01" db="EMBL/GenBank/DDBJ databases">
        <title>Sequence of minutes 4-25 of Escherichia coli.</title>
        <authorList>
            <person name="Chung E."/>
            <person name="Allen E."/>
            <person name="Araujo R."/>
            <person name="Aparicio A.M."/>
            <person name="Davis K."/>
            <person name="Duncan M."/>
            <person name="Federspiel N."/>
            <person name="Hyman R."/>
            <person name="Kalman S."/>
            <person name="Komp C."/>
            <person name="Kurdi O."/>
            <person name="Lew H."/>
            <person name="Lin D."/>
            <person name="Namath A."/>
            <person name="Oefner P."/>
            <person name="Roberts D."/>
            <person name="Schramm S."/>
            <person name="Davis R.W."/>
        </authorList>
    </citation>
    <scope>NUCLEOTIDE SEQUENCE [LARGE SCALE GENOMIC DNA]</scope>
    <source>
        <strain>K12 / MG1655 / ATCC 47076</strain>
    </source>
</reference>
<reference key="2">
    <citation type="journal article" date="1997" name="Science">
        <title>The complete genome sequence of Escherichia coli K-12.</title>
        <authorList>
            <person name="Blattner F.R."/>
            <person name="Plunkett G. III"/>
            <person name="Bloch C.A."/>
            <person name="Perna N.T."/>
            <person name="Burland V."/>
            <person name="Riley M."/>
            <person name="Collado-Vides J."/>
            <person name="Glasner J.D."/>
            <person name="Rode C.K."/>
            <person name="Mayhew G.F."/>
            <person name="Gregor J."/>
            <person name="Davis N.W."/>
            <person name="Kirkpatrick H.A."/>
            <person name="Goeden M.A."/>
            <person name="Rose D.J."/>
            <person name="Mau B."/>
            <person name="Shao Y."/>
        </authorList>
    </citation>
    <scope>NUCLEOTIDE SEQUENCE [LARGE SCALE GENOMIC DNA]</scope>
    <source>
        <strain>K12 / MG1655 / ATCC 47076</strain>
    </source>
</reference>
<reference key="3">
    <citation type="journal article" date="2006" name="Mol. Syst. Biol.">
        <title>Highly accurate genome sequences of Escherichia coli K-12 strains MG1655 and W3110.</title>
        <authorList>
            <person name="Hayashi K."/>
            <person name="Morooka N."/>
            <person name="Yamamoto Y."/>
            <person name="Fujita K."/>
            <person name="Isono K."/>
            <person name="Choi S."/>
            <person name="Ohtsubo E."/>
            <person name="Baba T."/>
            <person name="Wanner B.L."/>
            <person name="Mori H."/>
            <person name="Horiuchi T."/>
        </authorList>
    </citation>
    <scope>NUCLEOTIDE SEQUENCE [LARGE SCALE GENOMIC DNA]</scope>
    <source>
        <strain>K12 / W3110 / ATCC 27325 / DSM 5911</strain>
    </source>
</reference>
<reference key="4">
    <citation type="journal article" date="2001" name="J. Bacteriol.">
        <title>matB, a common fimbrillin gene of Escherichia coli, expressed in a genetically conserved, virulent clonal group.</title>
        <authorList>
            <person name="Pouttu R."/>
            <person name="Westerlund-Wikstrom B."/>
            <person name="Lang H."/>
            <person name="Alsti K."/>
            <person name="Virkola R."/>
            <person name="Saarela U."/>
            <person name="Siitonen A."/>
            <person name="Kalkkinen N."/>
            <person name="Korhonen T.K."/>
        </authorList>
    </citation>
    <scope>EXPRESSION</scope>
    <source>
        <strain>K12</strain>
    </source>
</reference>
<reference key="5">
    <citation type="journal article" date="2012" name="Microbiology">
        <title>The fimbriae activator MatA switches off motility in Escherichia coli by repression of the flagellar master operon flhDC.</title>
        <authorList>
            <person name="Lehti T.A."/>
            <person name="Bauchart P."/>
            <person name="Dobrindt U."/>
            <person name="Korhonen T.K."/>
            <person name="Westerlund-Wikstrom B."/>
        </authorList>
    </citation>
    <scope>FUNCTION</scope>
    <scope>MUTAGENESIS OF HIS-179</scope>
    <source>
        <strain>K12 / MG1655 / ATCC 47076</strain>
    </source>
</reference>
<sequence length="196" mass="23274">MTWQSDYSRDYEVKNHMECQNRSDKYIWSPHDAYFYKGLSELIVDIDRLIYLSLEKIRKDFVFINLSTDSLSEFINRDNEWLSAVKGKQVVLIAARKSEALANYWYYNSNIRGVVYAGLSRDIRKELVYVINGRFLRKDIKKDKITDREMEIIRMTAQGMQPKSIARIENCSVKTVYTHRRNAEAKLYSKIYKLVQ</sequence>
<dbReference type="EMBL" id="U73857">
    <property type="protein sequence ID" value="AAB18023.1"/>
    <property type="molecule type" value="Genomic_DNA"/>
</dbReference>
<dbReference type="EMBL" id="U00096">
    <property type="protein sequence ID" value="AAC73397.1"/>
    <property type="molecule type" value="Genomic_DNA"/>
</dbReference>
<dbReference type="EMBL" id="AP009048">
    <property type="protein sequence ID" value="BAE76078.1"/>
    <property type="molecule type" value="Genomic_DNA"/>
</dbReference>
<dbReference type="PIR" id="F64755">
    <property type="entry name" value="F64755"/>
</dbReference>
<dbReference type="RefSeq" id="NP_414828.1">
    <property type="nucleotide sequence ID" value="NC_000913.3"/>
</dbReference>
<dbReference type="SMR" id="P71301"/>
<dbReference type="BioGRID" id="4259793">
    <property type="interactions" value="113"/>
</dbReference>
<dbReference type="BioGRID" id="849363">
    <property type="interactions" value="1"/>
</dbReference>
<dbReference type="ComplexPortal" id="CPX-5764">
    <property type="entry name" value="matA-rcsB DNA-binding transcription factor complex"/>
</dbReference>
<dbReference type="FunCoup" id="P71301">
    <property type="interactions" value="55"/>
</dbReference>
<dbReference type="IntAct" id="P71301">
    <property type="interactions" value="2"/>
</dbReference>
<dbReference type="STRING" id="511145.b0294"/>
<dbReference type="PaxDb" id="511145-b0294"/>
<dbReference type="EnsemblBacteria" id="AAC73397">
    <property type="protein sequence ID" value="AAC73397"/>
    <property type="gene ID" value="b0294"/>
</dbReference>
<dbReference type="GeneID" id="944966"/>
<dbReference type="KEGG" id="ecj:JW5031"/>
<dbReference type="KEGG" id="eco:b0294"/>
<dbReference type="PATRIC" id="fig|511145.12.peg.298"/>
<dbReference type="EchoBASE" id="EB4070"/>
<dbReference type="eggNOG" id="COG2771">
    <property type="taxonomic scope" value="Bacteria"/>
</dbReference>
<dbReference type="HOGENOM" id="CLU_128111_0_0_6"/>
<dbReference type="InParanoid" id="P71301"/>
<dbReference type="OMA" id="CIWPAHD"/>
<dbReference type="PhylomeDB" id="P71301"/>
<dbReference type="BioCyc" id="EcoCyc:G6165-MONOMER"/>
<dbReference type="PRO" id="PR:P71301"/>
<dbReference type="Proteomes" id="UP000000625">
    <property type="component" value="Chromosome"/>
</dbReference>
<dbReference type="GO" id="GO:0005737">
    <property type="term" value="C:cytoplasm"/>
    <property type="evidence" value="ECO:0007669"/>
    <property type="project" value="UniProtKB-SubCell"/>
</dbReference>
<dbReference type="GO" id="GO:0005667">
    <property type="term" value="C:transcription regulator complex"/>
    <property type="evidence" value="ECO:0000353"/>
    <property type="project" value="ComplexPortal"/>
</dbReference>
<dbReference type="GO" id="GO:0003677">
    <property type="term" value="F:DNA binding"/>
    <property type="evidence" value="ECO:0007669"/>
    <property type="project" value="UniProtKB-KW"/>
</dbReference>
<dbReference type="GO" id="GO:1902021">
    <property type="term" value="P:regulation of bacterial-type flagellum-dependent cell motility"/>
    <property type="evidence" value="ECO:0000269"/>
    <property type="project" value="EcoCyc"/>
</dbReference>
<dbReference type="GO" id="GO:0006355">
    <property type="term" value="P:regulation of DNA-templated transcription"/>
    <property type="evidence" value="ECO:0000314"/>
    <property type="project" value="ComplexPortal"/>
</dbReference>
<dbReference type="CDD" id="cd06170">
    <property type="entry name" value="LuxR_C_like"/>
    <property type="match status" value="1"/>
</dbReference>
<dbReference type="Gene3D" id="1.10.10.10">
    <property type="entry name" value="Winged helix-like DNA-binding domain superfamily/Winged helix DNA-binding domain"/>
    <property type="match status" value="1"/>
</dbReference>
<dbReference type="InterPro" id="IPR016032">
    <property type="entry name" value="Sig_transdc_resp-reg_C-effctor"/>
</dbReference>
<dbReference type="InterPro" id="IPR000792">
    <property type="entry name" value="Tscrpt_reg_LuxR_C"/>
</dbReference>
<dbReference type="InterPro" id="IPR036388">
    <property type="entry name" value="WH-like_DNA-bd_sf"/>
</dbReference>
<dbReference type="Pfam" id="PF00196">
    <property type="entry name" value="GerE"/>
    <property type="match status" value="1"/>
</dbReference>
<dbReference type="PRINTS" id="PR00038">
    <property type="entry name" value="HTHLUXR"/>
</dbReference>
<dbReference type="SMART" id="SM00421">
    <property type="entry name" value="HTH_LUXR"/>
    <property type="match status" value="1"/>
</dbReference>
<dbReference type="SUPFAM" id="SSF46894">
    <property type="entry name" value="C-terminal effector domain of the bipartite response regulators"/>
    <property type="match status" value="1"/>
</dbReference>
<dbReference type="PROSITE" id="PS50043">
    <property type="entry name" value="HTH_LUXR_2"/>
    <property type="match status" value="1"/>
</dbReference>
<keyword id="KW-0010">Activator</keyword>
<keyword id="KW-0963">Cytoplasm</keyword>
<keyword id="KW-0238">DNA-binding</keyword>
<keyword id="KW-1185">Reference proteome</keyword>
<keyword id="KW-0678">Repressor</keyword>
<keyword id="KW-0804">Transcription</keyword>
<keyword id="KW-0805">Transcription regulation</keyword>
<organism>
    <name type="scientific">Escherichia coli (strain K12)</name>
    <dbReference type="NCBI Taxonomy" id="83333"/>
    <lineage>
        <taxon>Bacteria</taxon>
        <taxon>Pseudomonadati</taxon>
        <taxon>Pseudomonadota</taxon>
        <taxon>Gammaproteobacteria</taxon>
        <taxon>Enterobacterales</taxon>
        <taxon>Enterobacteriaceae</taxon>
        <taxon>Escherichia</taxon>
    </lineage>
</organism>
<accession>P71301</accession>
<accession>Q2MCC8</accession>
<name>ECPR_ECOLI</name>
<comment type="function">
    <text evidence="1 3 4">Part of the ecpRABCDE operon, which encodes the E.coli common pilus (ECP). ECP is found in both commensal and pathogenic strains and plays a dual role in early-stage biofilm development and host cell recognition. Positively regulates the expression of the ecp operon (By similarity). Also represses expression of the flagellar master operon flhDC, and consequently prevents flagellum biosynthesis and motility. Acts by binding to the regulatory region of the flhDC operon (Probable).</text>
</comment>
<comment type="subcellular location">
    <subcellularLocation>
        <location evidence="4">Cytoplasm</location>
    </subcellularLocation>
</comment>
<comment type="induction">
    <text evidence="1">Negatively regulated by H-NS. Positively autoregulated. Also positively regulated by IHF (By similarity).</text>
</comment>
<comment type="miscellaneous">
    <text evidence="5">Expressed in strain K12.</text>
</comment>
<comment type="similarity">
    <text evidence="4">Belongs to the EcpR/MatA family.</text>
</comment>
<evidence type="ECO:0000250" key="1"/>
<evidence type="ECO:0000255" key="2">
    <source>
        <dbReference type="PROSITE-ProRule" id="PRU00411"/>
    </source>
</evidence>
<evidence type="ECO:0000269" key="3">
    <source>
    </source>
</evidence>
<evidence type="ECO:0000305" key="4"/>
<evidence type="ECO:0000305" key="5">
    <source>
    </source>
</evidence>
<proteinExistence type="evidence at protein level"/>
<feature type="chain" id="PRO_0000184199" description="HTH-type transcriptional regulator EcpR">
    <location>
        <begin position="1"/>
        <end position="196"/>
    </location>
</feature>
<feature type="domain" description="HTH luxR-type" evidence="2">
    <location>
        <begin position="138"/>
        <end position="196"/>
    </location>
</feature>
<feature type="DNA-binding region" description="H-T-H motif" evidence="2">
    <location>
        <begin position="162"/>
        <end position="181"/>
    </location>
</feature>
<feature type="mutagenesis site" description="Slightly increases motility." evidence="3">
    <original>H</original>
    <variation>P</variation>
    <location>
        <position position="179"/>
    </location>
</feature>